<feature type="signal peptide" evidence="1">
    <location>
        <begin position="1"/>
        <end position="25"/>
    </location>
</feature>
<feature type="chain" id="PRO_0000234943" description="Ribonuclease pancreatic delta-type">
    <location>
        <begin position="26"/>
        <end position="150"/>
    </location>
</feature>
<feature type="active site" description="Proton acceptor" evidence="1">
    <location>
        <position position="37"/>
    </location>
</feature>
<feature type="active site" description="Proton donor" evidence="1">
    <location>
        <position position="145"/>
    </location>
</feature>
<feature type="binding site" evidence="1">
    <location>
        <position position="35"/>
    </location>
    <ligand>
        <name>substrate</name>
    </ligand>
</feature>
<feature type="binding site" evidence="1">
    <location>
        <begin position="66"/>
        <end position="70"/>
    </location>
    <ligand>
        <name>substrate</name>
    </ligand>
</feature>
<feature type="binding site" evidence="1">
    <location>
        <position position="91"/>
    </location>
    <ligand>
        <name>substrate</name>
    </ligand>
</feature>
<feature type="disulfide bond" evidence="1">
    <location>
        <begin position="51"/>
        <end position="110"/>
    </location>
</feature>
<feature type="disulfide bond" evidence="1">
    <location>
        <begin position="65"/>
        <end position="121"/>
    </location>
</feature>
<feature type="disulfide bond" evidence="1">
    <location>
        <begin position="83"/>
        <end position="136"/>
    </location>
</feature>
<feature type="disulfide bond" evidence="1">
    <location>
        <begin position="90"/>
        <end position="98"/>
    </location>
</feature>
<accession>Q8VD85</accession>
<keyword id="KW-1015">Disulfide bond</keyword>
<keyword id="KW-0255">Endonuclease</keyword>
<keyword id="KW-0378">Hydrolase</keyword>
<keyword id="KW-0456">Lyase</keyword>
<keyword id="KW-0540">Nuclease</keyword>
<keyword id="KW-0964">Secreted</keyword>
<keyword id="KW-0732">Signal</keyword>
<proteinExistence type="inferred from homology"/>
<organism>
    <name type="scientific">Rattus tiomanicus</name>
    <name type="common">Malayan field rat</name>
    <name type="synonym">Rattus jalorensis</name>
    <dbReference type="NCBI Taxonomy" id="83755"/>
    <lineage>
        <taxon>Eukaryota</taxon>
        <taxon>Metazoa</taxon>
        <taxon>Chordata</taxon>
        <taxon>Craniata</taxon>
        <taxon>Vertebrata</taxon>
        <taxon>Euteleostomi</taxon>
        <taxon>Mammalia</taxon>
        <taxon>Eutheria</taxon>
        <taxon>Euarchontoglires</taxon>
        <taxon>Glires</taxon>
        <taxon>Rodentia</taxon>
        <taxon>Myomorpha</taxon>
        <taxon>Muroidea</taxon>
        <taxon>Muridae</taxon>
        <taxon>Murinae</taxon>
        <taxon>Rattus</taxon>
    </lineage>
</organism>
<name>RNS1D_RATTI</name>
<protein>
    <recommendedName>
        <fullName>Ribonuclease pancreatic delta-type</fullName>
        <ecNumber>4.6.1.18</ecNumber>
    </recommendedName>
    <alternativeName>
        <fullName>RNase 1 delta</fullName>
    </alternativeName>
</protein>
<evidence type="ECO:0000250" key="1"/>
<evidence type="ECO:0000305" key="2"/>
<sequence length="150" mass="16848">MGLEKSFILFSLLVLVLGWVQPSLGRKPSVQDFKRQHMDPGSPPNSRPTICNQMMKRRGITKDSCKPVNTFLHESGQRVQAICSQRQMTCKTSSRKNCHKSSSTLHITDCNLKGSSKYPNCDYTTTNRQKHIIIACEGNPLVPVHYDASV</sequence>
<dbReference type="EC" id="4.6.1.18"/>
<dbReference type="EMBL" id="AJ315464">
    <property type="protein sequence ID" value="CAC86445.1"/>
    <property type="molecule type" value="Genomic_DNA"/>
</dbReference>
<dbReference type="SMR" id="Q8VD85"/>
<dbReference type="GO" id="GO:0005576">
    <property type="term" value="C:extracellular region"/>
    <property type="evidence" value="ECO:0007669"/>
    <property type="project" value="UniProtKB-SubCell"/>
</dbReference>
<dbReference type="GO" id="GO:0016829">
    <property type="term" value="F:lyase activity"/>
    <property type="evidence" value="ECO:0007669"/>
    <property type="project" value="UniProtKB-KW"/>
</dbReference>
<dbReference type="GO" id="GO:0003676">
    <property type="term" value="F:nucleic acid binding"/>
    <property type="evidence" value="ECO:0007669"/>
    <property type="project" value="InterPro"/>
</dbReference>
<dbReference type="GO" id="GO:0004522">
    <property type="term" value="F:ribonuclease A activity"/>
    <property type="evidence" value="ECO:0007669"/>
    <property type="project" value="UniProtKB-EC"/>
</dbReference>
<dbReference type="GO" id="GO:0050830">
    <property type="term" value="P:defense response to Gram-positive bacterium"/>
    <property type="evidence" value="ECO:0007669"/>
    <property type="project" value="TreeGrafter"/>
</dbReference>
<dbReference type="CDD" id="cd06265">
    <property type="entry name" value="RNase_A_canonical"/>
    <property type="match status" value="1"/>
</dbReference>
<dbReference type="FunFam" id="3.10.130.10:FF:000001">
    <property type="entry name" value="Ribonuclease pancreatic"/>
    <property type="match status" value="1"/>
</dbReference>
<dbReference type="Gene3D" id="3.10.130.10">
    <property type="entry name" value="Ribonuclease A-like domain"/>
    <property type="match status" value="1"/>
</dbReference>
<dbReference type="InterPro" id="IPR001427">
    <property type="entry name" value="RNaseA"/>
</dbReference>
<dbReference type="InterPro" id="IPR036816">
    <property type="entry name" value="RNaseA-like_dom_sf"/>
</dbReference>
<dbReference type="InterPro" id="IPR023411">
    <property type="entry name" value="RNaseA_AS"/>
</dbReference>
<dbReference type="InterPro" id="IPR023412">
    <property type="entry name" value="RNaseA_domain"/>
</dbReference>
<dbReference type="PANTHER" id="PTHR11437">
    <property type="entry name" value="RIBONUCLEASE"/>
    <property type="match status" value="1"/>
</dbReference>
<dbReference type="PANTHER" id="PTHR11437:SF24">
    <property type="entry name" value="RIBONUCLEASE PANCREATIC"/>
    <property type="match status" value="1"/>
</dbReference>
<dbReference type="Pfam" id="PF00074">
    <property type="entry name" value="RnaseA"/>
    <property type="match status" value="1"/>
</dbReference>
<dbReference type="PRINTS" id="PR00794">
    <property type="entry name" value="RIBONUCLEASE"/>
</dbReference>
<dbReference type="SMART" id="SM00092">
    <property type="entry name" value="RNAse_Pc"/>
    <property type="match status" value="1"/>
</dbReference>
<dbReference type="SUPFAM" id="SSF54076">
    <property type="entry name" value="RNase A-like"/>
    <property type="match status" value="1"/>
</dbReference>
<dbReference type="PROSITE" id="PS00127">
    <property type="entry name" value="RNASE_PANCREATIC"/>
    <property type="match status" value="1"/>
</dbReference>
<comment type="function">
    <text evidence="1">Endonuclease that catalyzes the cleavage of RNA on the 3' side of pyrimidine nucleotides. Acts on single-stranded and double-stranded RNA (By similarity).</text>
</comment>
<comment type="catalytic activity">
    <reaction>
        <text>an [RNA] containing cytidine + H2O = an [RNA]-3'-cytidine-3'-phosphate + a 5'-hydroxy-ribonucleotide-3'-[RNA].</text>
        <dbReference type="EC" id="4.6.1.18"/>
    </reaction>
</comment>
<comment type="catalytic activity">
    <reaction>
        <text>an [RNA] containing uridine + H2O = an [RNA]-3'-uridine-3'-phosphate + a 5'-hydroxy-ribonucleotide-3'-[RNA].</text>
        <dbReference type="EC" id="4.6.1.18"/>
    </reaction>
</comment>
<comment type="subunit">
    <text evidence="1">Monomer.</text>
</comment>
<comment type="subcellular location">
    <subcellularLocation>
        <location evidence="1">Secreted</location>
    </subcellularLocation>
</comment>
<comment type="similarity">
    <text evidence="2">Belongs to the pancreatic ribonuclease family.</text>
</comment>
<reference key="1">
    <citation type="journal article" date="2002" name="J. Mol. Evol.">
        <title>Pancreatic-type ribonuclease 1 gene duplications in rat species.</title>
        <authorList>
            <person name="Dubois J.-Y.F."/>
            <person name="Jekel P.A."/>
            <person name="Mulder P.P.M.F.A."/>
            <person name="Bussink A.P."/>
            <person name="Catzeflis F.M."/>
            <person name="Carsana A."/>
            <person name="Beintema J.J."/>
        </authorList>
    </citation>
    <scope>NUCLEOTIDE SEQUENCE [GENOMIC DNA]</scope>
</reference>